<reference key="1">
    <citation type="journal article" date="2005" name="Proc. Natl. Acad. Sci. U.S.A.">
        <title>Complete genome sequence of the probiotic lactic acid bacterium Lactobacillus acidophilus NCFM.</title>
        <authorList>
            <person name="Altermann E."/>
            <person name="Russell W.M."/>
            <person name="Azcarate-Peril M.A."/>
            <person name="Barrangou R."/>
            <person name="Buck B.L."/>
            <person name="McAuliffe O."/>
            <person name="Souther N."/>
            <person name="Dobson A."/>
            <person name="Duong T."/>
            <person name="Callanan M."/>
            <person name="Lick S."/>
            <person name="Hamrick A."/>
            <person name="Cano R."/>
            <person name="Klaenhammer T.R."/>
        </authorList>
    </citation>
    <scope>NUCLEOTIDE SEQUENCE [LARGE SCALE GENOMIC DNA]</scope>
    <source>
        <strain>ATCC 700396 / NCK56 / N2 / NCFM</strain>
    </source>
</reference>
<protein>
    <recommendedName>
        <fullName evidence="1">Phenylalanine--tRNA ligase alpha subunit</fullName>
        <ecNumber evidence="1">6.1.1.20</ecNumber>
    </recommendedName>
    <alternativeName>
        <fullName evidence="1">Phenylalanyl-tRNA synthetase alpha subunit</fullName>
        <shortName evidence="1">PheRS</shortName>
    </alternativeName>
</protein>
<organism>
    <name type="scientific">Lactobacillus acidophilus (strain ATCC 700396 / NCK56 / N2 / NCFM)</name>
    <dbReference type="NCBI Taxonomy" id="272621"/>
    <lineage>
        <taxon>Bacteria</taxon>
        <taxon>Bacillati</taxon>
        <taxon>Bacillota</taxon>
        <taxon>Bacilli</taxon>
        <taxon>Lactobacillales</taxon>
        <taxon>Lactobacillaceae</taxon>
        <taxon>Lactobacillus</taxon>
    </lineage>
</organism>
<proteinExistence type="inferred from homology"/>
<gene>
    <name evidence="1" type="primary">pheS</name>
    <name type="ordered locus">LBA1519</name>
</gene>
<accession>Q5FIY6</accession>
<keyword id="KW-0030">Aminoacyl-tRNA synthetase</keyword>
<keyword id="KW-0067">ATP-binding</keyword>
<keyword id="KW-0963">Cytoplasm</keyword>
<keyword id="KW-0436">Ligase</keyword>
<keyword id="KW-0460">Magnesium</keyword>
<keyword id="KW-0479">Metal-binding</keyword>
<keyword id="KW-0547">Nucleotide-binding</keyword>
<keyword id="KW-0648">Protein biosynthesis</keyword>
<keyword id="KW-1185">Reference proteome</keyword>
<comment type="catalytic activity">
    <reaction evidence="1">
        <text>tRNA(Phe) + L-phenylalanine + ATP = L-phenylalanyl-tRNA(Phe) + AMP + diphosphate + H(+)</text>
        <dbReference type="Rhea" id="RHEA:19413"/>
        <dbReference type="Rhea" id="RHEA-COMP:9668"/>
        <dbReference type="Rhea" id="RHEA-COMP:9699"/>
        <dbReference type="ChEBI" id="CHEBI:15378"/>
        <dbReference type="ChEBI" id="CHEBI:30616"/>
        <dbReference type="ChEBI" id="CHEBI:33019"/>
        <dbReference type="ChEBI" id="CHEBI:58095"/>
        <dbReference type="ChEBI" id="CHEBI:78442"/>
        <dbReference type="ChEBI" id="CHEBI:78531"/>
        <dbReference type="ChEBI" id="CHEBI:456215"/>
        <dbReference type="EC" id="6.1.1.20"/>
    </reaction>
</comment>
<comment type="cofactor">
    <cofactor evidence="1">
        <name>Mg(2+)</name>
        <dbReference type="ChEBI" id="CHEBI:18420"/>
    </cofactor>
    <text evidence="1">Binds 2 magnesium ions per tetramer.</text>
</comment>
<comment type="subunit">
    <text evidence="1">Tetramer of two alpha and two beta subunits.</text>
</comment>
<comment type="subcellular location">
    <subcellularLocation>
        <location evidence="1">Cytoplasm</location>
    </subcellularLocation>
</comment>
<comment type="similarity">
    <text evidence="1">Belongs to the class-II aminoacyl-tRNA synthetase family. Phe-tRNA synthetase alpha subunit type 1 subfamily.</text>
</comment>
<dbReference type="EC" id="6.1.1.20" evidence="1"/>
<dbReference type="EMBL" id="CP000033">
    <property type="protein sequence ID" value="AAV43338.1"/>
    <property type="molecule type" value="Genomic_DNA"/>
</dbReference>
<dbReference type="RefSeq" id="WP_003548296.1">
    <property type="nucleotide sequence ID" value="NC_006814.3"/>
</dbReference>
<dbReference type="RefSeq" id="YP_194369.1">
    <property type="nucleotide sequence ID" value="NC_006814.3"/>
</dbReference>
<dbReference type="SMR" id="Q5FIY6"/>
<dbReference type="STRING" id="272621.LBA1519"/>
<dbReference type="GeneID" id="93289412"/>
<dbReference type="KEGG" id="lac:LBA1519"/>
<dbReference type="PATRIC" id="fig|272621.13.peg.1443"/>
<dbReference type="eggNOG" id="COG0016">
    <property type="taxonomic scope" value="Bacteria"/>
</dbReference>
<dbReference type="HOGENOM" id="CLU_025086_0_1_9"/>
<dbReference type="OrthoDB" id="9800719at2"/>
<dbReference type="BioCyc" id="LACI272621:G1G49-1487-MONOMER"/>
<dbReference type="Proteomes" id="UP000006381">
    <property type="component" value="Chromosome"/>
</dbReference>
<dbReference type="GO" id="GO:0005737">
    <property type="term" value="C:cytoplasm"/>
    <property type="evidence" value="ECO:0007669"/>
    <property type="project" value="UniProtKB-SubCell"/>
</dbReference>
<dbReference type="GO" id="GO:0005524">
    <property type="term" value="F:ATP binding"/>
    <property type="evidence" value="ECO:0007669"/>
    <property type="project" value="UniProtKB-UniRule"/>
</dbReference>
<dbReference type="GO" id="GO:0140096">
    <property type="term" value="F:catalytic activity, acting on a protein"/>
    <property type="evidence" value="ECO:0007669"/>
    <property type="project" value="UniProtKB-ARBA"/>
</dbReference>
<dbReference type="GO" id="GO:0000287">
    <property type="term" value="F:magnesium ion binding"/>
    <property type="evidence" value="ECO:0007669"/>
    <property type="project" value="UniProtKB-UniRule"/>
</dbReference>
<dbReference type="GO" id="GO:0004826">
    <property type="term" value="F:phenylalanine-tRNA ligase activity"/>
    <property type="evidence" value="ECO:0007669"/>
    <property type="project" value="UniProtKB-UniRule"/>
</dbReference>
<dbReference type="GO" id="GO:0016740">
    <property type="term" value="F:transferase activity"/>
    <property type="evidence" value="ECO:0007669"/>
    <property type="project" value="UniProtKB-ARBA"/>
</dbReference>
<dbReference type="GO" id="GO:0000049">
    <property type="term" value="F:tRNA binding"/>
    <property type="evidence" value="ECO:0007669"/>
    <property type="project" value="InterPro"/>
</dbReference>
<dbReference type="GO" id="GO:0006432">
    <property type="term" value="P:phenylalanyl-tRNA aminoacylation"/>
    <property type="evidence" value="ECO:0007669"/>
    <property type="project" value="UniProtKB-UniRule"/>
</dbReference>
<dbReference type="CDD" id="cd00496">
    <property type="entry name" value="PheRS_alpha_core"/>
    <property type="match status" value="1"/>
</dbReference>
<dbReference type="FunFam" id="3.30.930.10:FF:000003">
    <property type="entry name" value="Phenylalanine--tRNA ligase alpha subunit"/>
    <property type="match status" value="1"/>
</dbReference>
<dbReference type="Gene3D" id="3.30.930.10">
    <property type="entry name" value="Bira Bifunctional Protein, Domain 2"/>
    <property type="match status" value="1"/>
</dbReference>
<dbReference type="HAMAP" id="MF_00281">
    <property type="entry name" value="Phe_tRNA_synth_alpha1"/>
    <property type="match status" value="1"/>
</dbReference>
<dbReference type="InterPro" id="IPR006195">
    <property type="entry name" value="aa-tRNA-synth_II"/>
</dbReference>
<dbReference type="InterPro" id="IPR045864">
    <property type="entry name" value="aa-tRNA-synth_II/BPL/LPL"/>
</dbReference>
<dbReference type="InterPro" id="IPR004529">
    <property type="entry name" value="Phe-tRNA-synth_IIc_asu"/>
</dbReference>
<dbReference type="InterPro" id="IPR004188">
    <property type="entry name" value="Phe-tRNA_ligase_II_N"/>
</dbReference>
<dbReference type="InterPro" id="IPR022911">
    <property type="entry name" value="Phe_tRNA_ligase_alpha1_bac"/>
</dbReference>
<dbReference type="InterPro" id="IPR002319">
    <property type="entry name" value="Phenylalanyl-tRNA_Synthase"/>
</dbReference>
<dbReference type="InterPro" id="IPR010978">
    <property type="entry name" value="tRNA-bd_arm"/>
</dbReference>
<dbReference type="NCBIfam" id="TIGR00468">
    <property type="entry name" value="pheS"/>
    <property type="match status" value="1"/>
</dbReference>
<dbReference type="PANTHER" id="PTHR11538:SF41">
    <property type="entry name" value="PHENYLALANINE--TRNA LIGASE, MITOCHONDRIAL"/>
    <property type="match status" value="1"/>
</dbReference>
<dbReference type="PANTHER" id="PTHR11538">
    <property type="entry name" value="PHENYLALANYL-TRNA SYNTHETASE"/>
    <property type="match status" value="1"/>
</dbReference>
<dbReference type="Pfam" id="PF02912">
    <property type="entry name" value="Phe_tRNA-synt_N"/>
    <property type="match status" value="1"/>
</dbReference>
<dbReference type="Pfam" id="PF01409">
    <property type="entry name" value="tRNA-synt_2d"/>
    <property type="match status" value="1"/>
</dbReference>
<dbReference type="SUPFAM" id="SSF55681">
    <property type="entry name" value="Class II aaRS and biotin synthetases"/>
    <property type="match status" value="1"/>
</dbReference>
<dbReference type="SUPFAM" id="SSF46589">
    <property type="entry name" value="tRNA-binding arm"/>
    <property type="match status" value="1"/>
</dbReference>
<dbReference type="PROSITE" id="PS50862">
    <property type="entry name" value="AA_TRNA_LIGASE_II"/>
    <property type="match status" value="1"/>
</dbReference>
<name>SYFA_LACAC</name>
<sequence length="349" mass="39801">MDLFDKLKELHEEGLKQISKATDEKTLNEVRVELVGRKGELTKILHSMRDVAPENRREVGQKVNELRDLFNAQLDEAKENIVKAVLAKRLEEEKIDVTLPGREGHLGSKHPINIILDDLESYFIGMGYKVVQGPEIETDHYVFEMMNLPKDHPARDMQATFYINDENLLRSQTSGDQARVLEKHDFSKGPLKMVGPGKVYRRDDDDATHSHQFMQMEGLVIDKHVTMSDLKGTLEMIAKHVFGQDRATRLRPSYFPFTEPSVEMDVSCFNCDGKGCPICKYTGWIEVLGAGMVHPNVLENAGVDSNVYGGFAFGVGLDRFAILKYGIDDIRDFYTNDVRFLEQFRKEEK</sequence>
<evidence type="ECO:0000255" key="1">
    <source>
        <dbReference type="HAMAP-Rule" id="MF_00281"/>
    </source>
</evidence>
<feature type="chain" id="PRO_0000231987" description="Phenylalanine--tRNA ligase alpha subunit">
    <location>
        <begin position="1"/>
        <end position="349"/>
    </location>
</feature>
<feature type="binding site" evidence="1">
    <location>
        <position position="259"/>
    </location>
    <ligand>
        <name>Mg(2+)</name>
        <dbReference type="ChEBI" id="CHEBI:18420"/>
        <note>shared with beta subunit</note>
    </ligand>
</feature>